<comment type="similarity">
    <text evidence="1">Belongs to the bacterial ribosomal protein bL28 family.</text>
</comment>
<name>RL28_STAES</name>
<keyword id="KW-0687">Ribonucleoprotein</keyword>
<keyword id="KW-0689">Ribosomal protein</keyword>
<protein>
    <recommendedName>
        <fullName evidence="1">Large ribosomal subunit protein bL28</fullName>
    </recommendedName>
    <alternativeName>
        <fullName evidence="2">50S ribosomal protein L28</fullName>
    </alternativeName>
</protein>
<reference key="1">
    <citation type="journal article" date="2003" name="Mol. Microbiol.">
        <title>Genome-based analysis of virulence genes in a non-biofilm-forming Staphylococcus epidermidis strain (ATCC 12228).</title>
        <authorList>
            <person name="Zhang Y.-Q."/>
            <person name="Ren S.-X."/>
            <person name="Li H.-L."/>
            <person name="Wang Y.-X."/>
            <person name="Fu G."/>
            <person name="Yang J."/>
            <person name="Qin Z.-Q."/>
            <person name="Miao Y.-G."/>
            <person name="Wang W.-Y."/>
            <person name="Chen R.-S."/>
            <person name="Shen Y."/>
            <person name="Chen Z."/>
            <person name="Yuan Z.-H."/>
            <person name="Zhao G.-P."/>
            <person name="Qu D."/>
            <person name="Danchin A."/>
            <person name="Wen Y.-M."/>
        </authorList>
    </citation>
    <scope>NUCLEOTIDE SEQUENCE [LARGE SCALE GENOMIC DNA]</scope>
    <source>
        <strain>ATCC 12228 / FDA PCI 1200</strain>
    </source>
</reference>
<feature type="chain" id="PRO_0000178554" description="Large ribosomal subunit protein bL28">
    <location>
        <begin position="1"/>
        <end position="62"/>
    </location>
</feature>
<accession>Q8CSV6</accession>
<evidence type="ECO:0000255" key="1">
    <source>
        <dbReference type="HAMAP-Rule" id="MF_00373"/>
    </source>
</evidence>
<evidence type="ECO:0000305" key="2"/>
<gene>
    <name evidence="1" type="primary">rpmB</name>
    <name type="ordered locus">SE_0899</name>
</gene>
<sequence>MGKQCFVTGRKASTGNHRSHALNANKRRWNANLQKVRILVDGKPKKVWVSARALKSGKVTRV</sequence>
<dbReference type="EMBL" id="AE015929">
    <property type="protein sequence ID" value="AAO04496.1"/>
    <property type="molecule type" value="Genomic_DNA"/>
</dbReference>
<dbReference type="RefSeq" id="NP_764454.1">
    <property type="nucleotide sequence ID" value="NC_004461.1"/>
</dbReference>
<dbReference type="RefSeq" id="WP_001830107.1">
    <property type="nucleotide sequence ID" value="NZ_WBME01000001.1"/>
</dbReference>
<dbReference type="SMR" id="Q8CSV6"/>
<dbReference type="GeneID" id="50018963"/>
<dbReference type="KEGG" id="sep:SE_0899"/>
<dbReference type="PATRIC" id="fig|176280.10.peg.872"/>
<dbReference type="eggNOG" id="COG0227">
    <property type="taxonomic scope" value="Bacteria"/>
</dbReference>
<dbReference type="HOGENOM" id="CLU_064548_7_1_9"/>
<dbReference type="OrthoDB" id="9805609at2"/>
<dbReference type="Proteomes" id="UP000001411">
    <property type="component" value="Chromosome"/>
</dbReference>
<dbReference type="GO" id="GO:1990904">
    <property type="term" value="C:ribonucleoprotein complex"/>
    <property type="evidence" value="ECO:0007669"/>
    <property type="project" value="UniProtKB-KW"/>
</dbReference>
<dbReference type="GO" id="GO:0005840">
    <property type="term" value="C:ribosome"/>
    <property type="evidence" value="ECO:0007669"/>
    <property type="project" value="UniProtKB-KW"/>
</dbReference>
<dbReference type="GO" id="GO:0003735">
    <property type="term" value="F:structural constituent of ribosome"/>
    <property type="evidence" value="ECO:0007669"/>
    <property type="project" value="InterPro"/>
</dbReference>
<dbReference type="GO" id="GO:0006412">
    <property type="term" value="P:translation"/>
    <property type="evidence" value="ECO:0007669"/>
    <property type="project" value="UniProtKB-UniRule"/>
</dbReference>
<dbReference type="Gene3D" id="2.30.170.40">
    <property type="entry name" value="Ribosomal protein L28/L24"/>
    <property type="match status" value="1"/>
</dbReference>
<dbReference type="HAMAP" id="MF_00373">
    <property type="entry name" value="Ribosomal_bL28"/>
    <property type="match status" value="1"/>
</dbReference>
<dbReference type="InterPro" id="IPR050096">
    <property type="entry name" value="Bacterial_rp_bL28"/>
</dbReference>
<dbReference type="InterPro" id="IPR026569">
    <property type="entry name" value="Ribosomal_bL28"/>
</dbReference>
<dbReference type="InterPro" id="IPR034704">
    <property type="entry name" value="Ribosomal_bL28/bL31-like_sf"/>
</dbReference>
<dbReference type="InterPro" id="IPR001383">
    <property type="entry name" value="Ribosomal_bL28_bact-type"/>
</dbReference>
<dbReference type="InterPro" id="IPR037147">
    <property type="entry name" value="Ribosomal_bL28_sf"/>
</dbReference>
<dbReference type="NCBIfam" id="TIGR00009">
    <property type="entry name" value="L28"/>
    <property type="match status" value="1"/>
</dbReference>
<dbReference type="PANTHER" id="PTHR39080">
    <property type="entry name" value="50S RIBOSOMAL PROTEIN L28"/>
    <property type="match status" value="1"/>
</dbReference>
<dbReference type="PANTHER" id="PTHR39080:SF1">
    <property type="entry name" value="LARGE RIBOSOMAL SUBUNIT PROTEIN BL28A"/>
    <property type="match status" value="1"/>
</dbReference>
<dbReference type="Pfam" id="PF00830">
    <property type="entry name" value="Ribosomal_L28"/>
    <property type="match status" value="1"/>
</dbReference>
<dbReference type="SUPFAM" id="SSF143800">
    <property type="entry name" value="L28p-like"/>
    <property type="match status" value="1"/>
</dbReference>
<organism>
    <name type="scientific">Staphylococcus epidermidis (strain ATCC 12228 / FDA PCI 1200)</name>
    <dbReference type="NCBI Taxonomy" id="176280"/>
    <lineage>
        <taxon>Bacteria</taxon>
        <taxon>Bacillati</taxon>
        <taxon>Bacillota</taxon>
        <taxon>Bacilli</taxon>
        <taxon>Bacillales</taxon>
        <taxon>Staphylococcaceae</taxon>
        <taxon>Staphylococcus</taxon>
    </lineage>
</organism>
<proteinExistence type="inferred from homology"/>